<protein>
    <recommendedName>
        <fullName evidence="1">Transcription elongation factor GreA</fullName>
    </recommendedName>
    <alternativeName>
        <fullName evidence="1">Transcript cleavage factor GreA</fullName>
    </alternativeName>
</protein>
<dbReference type="EMBL" id="CP001184">
    <property type="protein sequence ID" value="ACI59753.1"/>
    <property type="molecule type" value="Genomic_DNA"/>
</dbReference>
<dbReference type="RefSeq" id="WP_012560190.1">
    <property type="nucleotide sequence ID" value="NC_011374.1"/>
</dbReference>
<dbReference type="SMR" id="B5ZBB2"/>
<dbReference type="STRING" id="565575.UUR10_0303"/>
<dbReference type="KEGG" id="uue:UUR10_0303"/>
<dbReference type="eggNOG" id="COG0782">
    <property type="taxonomic scope" value="Bacteria"/>
</dbReference>
<dbReference type="HOGENOM" id="CLU_101379_2_1_14"/>
<dbReference type="OrthoDB" id="9808774at2"/>
<dbReference type="Proteomes" id="UP000002018">
    <property type="component" value="Chromosome"/>
</dbReference>
<dbReference type="GO" id="GO:0003677">
    <property type="term" value="F:DNA binding"/>
    <property type="evidence" value="ECO:0007669"/>
    <property type="project" value="UniProtKB-UniRule"/>
</dbReference>
<dbReference type="GO" id="GO:0070063">
    <property type="term" value="F:RNA polymerase binding"/>
    <property type="evidence" value="ECO:0007669"/>
    <property type="project" value="InterPro"/>
</dbReference>
<dbReference type="GO" id="GO:0006354">
    <property type="term" value="P:DNA-templated transcription elongation"/>
    <property type="evidence" value="ECO:0007669"/>
    <property type="project" value="TreeGrafter"/>
</dbReference>
<dbReference type="GO" id="GO:0032784">
    <property type="term" value="P:regulation of DNA-templated transcription elongation"/>
    <property type="evidence" value="ECO:0007669"/>
    <property type="project" value="UniProtKB-UniRule"/>
</dbReference>
<dbReference type="FunFam" id="1.10.287.180:FF:000001">
    <property type="entry name" value="Transcription elongation factor GreA"/>
    <property type="match status" value="1"/>
</dbReference>
<dbReference type="Gene3D" id="3.10.50.30">
    <property type="entry name" value="Transcription elongation factor, GreA/GreB, C-terminal domain"/>
    <property type="match status" value="1"/>
</dbReference>
<dbReference type="Gene3D" id="1.10.287.180">
    <property type="entry name" value="Transcription elongation factor, GreA/GreB, N-terminal domain"/>
    <property type="match status" value="1"/>
</dbReference>
<dbReference type="HAMAP" id="MF_00105">
    <property type="entry name" value="GreA_GreB"/>
    <property type="match status" value="1"/>
</dbReference>
<dbReference type="InterPro" id="IPR036953">
    <property type="entry name" value="GreA/GreB_C_sf"/>
</dbReference>
<dbReference type="InterPro" id="IPR018151">
    <property type="entry name" value="TF_GreA/GreB_CS"/>
</dbReference>
<dbReference type="InterPro" id="IPR006359">
    <property type="entry name" value="Tscrpt_elong_fac_GreA"/>
</dbReference>
<dbReference type="InterPro" id="IPR028624">
    <property type="entry name" value="Tscrpt_elong_fac_GreA/B"/>
</dbReference>
<dbReference type="InterPro" id="IPR001437">
    <property type="entry name" value="Tscrpt_elong_fac_GreA/B_C"/>
</dbReference>
<dbReference type="InterPro" id="IPR023459">
    <property type="entry name" value="Tscrpt_elong_fac_GreA/B_fam"/>
</dbReference>
<dbReference type="InterPro" id="IPR022691">
    <property type="entry name" value="Tscrpt_elong_fac_GreA/B_N"/>
</dbReference>
<dbReference type="InterPro" id="IPR036805">
    <property type="entry name" value="Tscrpt_elong_fac_GreA/B_N_sf"/>
</dbReference>
<dbReference type="NCBIfam" id="TIGR01462">
    <property type="entry name" value="greA"/>
    <property type="match status" value="1"/>
</dbReference>
<dbReference type="NCBIfam" id="NF001263">
    <property type="entry name" value="PRK00226.1-4"/>
    <property type="match status" value="1"/>
</dbReference>
<dbReference type="PANTHER" id="PTHR30437">
    <property type="entry name" value="TRANSCRIPTION ELONGATION FACTOR GREA"/>
    <property type="match status" value="1"/>
</dbReference>
<dbReference type="PANTHER" id="PTHR30437:SF4">
    <property type="entry name" value="TRANSCRIPTION ELONGATION FACTOR GREA"/>
    <property type="match status" value="1"/>
</dbReference>
<dbReference type="Pfam" id="PF01272">
    <property type="entry name" value="GreA_GreB"/>
    <property type="match status" value="1"/>
</dbReference>
<dbReference type="Pfam" id="PF03449">
    <property type="entry name" value="GreA_GreB_N"/>
    <property type="match status" value="1"/>
</dbReference>
<dbReference type="PIRSF" id="PIRSF006092">
    <property type="entry name" value="GreA_GreB"/>
    <property type="match status" value="1"/>
</dbReference>
<dbReference type="SUPFAM" id="SSF54534">
    <property type="entry name" value="FKBP-like"/>
    <property type="match status" value="1"/>
</dbReference>
<dbReference type="SUPFAM" id="SSF46557">
    <property type="entry name" value="GreA transcript cleavage protein, N-terminal domain"/>
    <property type="match status" value="1"/>
</dbReference>
<dbReference type="PROSITE" id="PS00829">
    <property type="entry name" value="GREAB_1"/>
    <property type="match status" value="1"/>
</dbReference>
<organism>
    <name type="scientific">Ureaplasma urealyticum serovar 10 (strain ATCC 33699 / Western)</name>
    <dbReference type="NCBI Taxonomy" id="565575"/>
    <lineage>
        <taxon>Bacteria</taxon>
        <taxon>Bacillati</taxon>
        <taxon>Mycoplasmatota</taxon>
        <taxon>Mycoplasmoidales</taxon>
        <taxon>Mycoplasmoidaceae</taxon>
        <taxon>Ureaplasma</taxon>
    </lineage>
</organism>
<sequence length="156" mass="17835">MAKYTISKHRLEELQLELREILDVKWPAITKQLQDAREQGDLSENADYDAAKNEQAALKKRKDEIEEILENYELIEDVMRSTDEVSIGSTIEIYNYQKDHKEVITLVGSMDSDPFANKISMDTPLGKAVVKQKEGSEVTVHTLALPYKVKIIKIID</sequence>
<evidence type="ECO:0000255" key="1">
    <source>
        <dbReference type="HAMAP-Rule" id="MF_00105"/>
    </source>
</evidence>
<reference key="1">
    <citation type="submission" date="2008-10" db="EMBL/GenBank/DDBJ databases">
        <title>Genome sequence of Ureaplasma urealyticum serovar 10 ATCC-33699.</title>
        <authorList>
            <person name="Shrivastava S."/>
            <person name="Methe B.A."/>
            <person name="Glass J."/>
            <person name="White K."/>
            <person name="Duffy L.B."/>
        </authorList>
    </citation>
    <scope>NUCLEOTIDE SEQUENCE [LARGE SCALE GENOMIC DNA]</scope>
    <source>
        <strain>ATCC 33699 / Western</strain>
    </source>
</reference>
<feature type="chain" id="PRO_1000094208" description="Transcription elongation factor GreA">
    <location>
        <begin position="1"/>
        <end position="156"/>
    </location>
</feature>
<feature type="coiled-coil region" evidence="1">
    <location>
        <begin position="1"/>
        <end position="84"/>
    </location>
</feature>
<name>GREA_UREU1</name>
<proteinExistence type="inferred from homology"/>
<keyword id="KW-0175">Coiled coil</keyword>
<keyword id="KW-0238">DNA-binding</keyword>
<keyword id="KW-0804">Transcription</keyword>
<keyword id="KW-0805">Transcription regulation</keyword>
<comment type="function">
    <text evidence="1">Necessary for efficient RNA polymerase transcription elongation past template-encoded arresting sites. The arresting sites in DNA have the property of trapping a certain fraction of elongating RNA polymerases that pass through, resulting in locked ternary complexes. Cleavage of the nascent transcript by cleavage factors such as GreA or GreB allows the resumption of elongation from the new 3'terminus. GreA releases sequences of 2 to 3 nucleotides.</text>
</comment>
<comment type="similarity">
    <text evidence="1">Belongs to the GreA/GreB family.</text>
</comment>
<gene>
    <name evidence="1" type="primary">greA</name>
    <name type="ordered locus">UUR10_0303</name>
</gene>
<accession>B5ZBB2</accession>